<gene>
    <name type="primary">crp</name>
</gene>
<feature type="signal peptide" evidence="3">
    <location>
        <begin position="1"/>
        <end position="16"/>
    </location>
</feature>
<feature type="chain" id="PRO_0000023536" description="C-reactive protein">
    <location>
        <begin position="17"/>
        <end position="238"/>
    </location>
</feature>
<feature type="domain" description="Pentraxin (PTX)" evidence="2">
    <location>
        <begin position="21"/>
        <end position="223"/>
    </location>
</feature>
<feature type="binding site" evidence="1">
    <location>
        <position position="76"/>
    </location>
    <ligand>
        <name>Ca(2+)</name>
        <dbReference type="ChEBI" id="CHEBI:29108"/>
        <label>1</label>
    </ligand>
</feature>
<feature type="binding site" evidence="1">
    <location>
        <position position="77"/>
    </location>
    <ligand>
        <name>Ca(2+)</name>
        <dbReference type="ChEBI" id="CHEBI:29108"/>
        <label>1</label>
    </ligand>
</feature>
<feature type="binding site" evidence="1">
    <location>
        <position position="154"/>
    </location>
    <ligand>
        <name>Ca(2+)</name>
        <dbReference type="ChEBI" id="CHEBI:29108"/>
        <label>1</label>
    </ligand>
</feature>
<feature type="binding site" evidence="2">
    <location>
        <position position="154"/>
    </location>
    <ligand>
        <name>Ca(2+)</name>
        <dbReference type="ChEBI" id="CHEBI:29108"/>
        <label>2</label>
    </ligand>
</feature>
<feature type="binding site" evidence="1">
    <location>
        <position position="155"/>
    </location>
    <ligand>
        <name>Ca(2+)</name>
        <dbReference type="ChEBI" id="CHEBI:29108"/>
        <label>1</label>
    </ligand>
</feature>
<feature type="binding site" evidence="1">
    <location>
        <position position="156"/>
    </location>
    <ligand>
        <name>Ca(2+)</name>
        <dbReference type="ChEBI" id="CHEBI:29108"/>
        <label>1</label>
    </ligand>
</feature>
<feature type="binding site" evidence="2">
    <location>
        <position position="156"/>
    </location>
    <ligand>
        <name>Ca(2+)</name>
        <dbReference type="ChEBI" id="CHEBI:29108"/>
        <label>2</label>
    </ligand>
</feature>
<feature type="binding site" evidence="2">
    <location>
        <position position="166"/>
    </location>
    <ligand>
        <name>Ca(2+)</name>
        <dbReference type="ChEBI" id="CHEBI:29108"/>
        <label>2</label>
    </ligand>
</feature>
<feature type="modified residue" description="Pyrrolidone carboxylic acid" evidence="1">
    <location>
        <position position="17"/>
    </location>
</feature>
<feature type="disulfide bond" evidence="2">
    <location>
        <begin position="52"/>
        <end position="113"/>
    </location>
</feature>
<feature type="sequence variant" evidence="3">
    <original>P</original>
    <variation>A</variation>
    <location>
        <position position="40"/>
    </location>
</feature>
<feature type="sequence variant" evidence="3">
    <original>L</original>
    <variation>F</variation>
    <location>
        <position position="66"/>
    </location>
</feature>
<feature type="sequence variant" evidence="3">
    <original>Q</original>
    <variation>L</variation>
    <location>
        <position position="151"/>
    </location>
</feature>
<feature type="sequence variant" evidence="3">
    <original>V</original>
    <variation>I</variation>
    <location>
        <position position="181"/>
    </location>
</feature>
<keyword id="KW-0011">Acute phase</keyword>
<keyword id="KW-0106">Calcium</keyword>
<keyword id="KW-0903">Direct protein sequencing</keyword>
<keyword id="KW-1015">Disulfide bond</keyword>
<keyword id="KW-0479">Metal-binding</keyword>
<keyword id="KW-0873">Pyrrolidone carboxylic acid</keyword>
<keyword id="KW-1185">Reference proteome</keyword>
<keyword id="KW-0964">Secreted</keyword>
<keyword id="KW-0732">Signal</keyword>
<evidence type="ECO:0000250" key="1"/>
<evidence type="ECO:0000255" key="2">
    <source>
        <dbReference type="PROSITE-ProRule" id="PRU01172"/>
    </source>
</evidence>
<evidence type="ECO:0000269" key="3">
    <source>
    </source>
</evidence>
<evidence type="ECO:0000305" key="4"/>
<accession>Q07203</accession>
<protein>
    <recommendedName>
        <fullName>C-reactive protein</fullName>
        <shortName>CRP</shortName>
    </recommendedName>
</protein>
<name>CRP_XENLA</name>
<reference key="1">
    <citation type="journal article" date="1993" name="J. Biol. Chem.">
        <title>Isolation and characterization of C-reactive protein (CRP) cDNA and genomic DNA from Xenopus laevis. A species representing an intermediate stage in CRP evolution.</title>
        <authorList>
            <person name="Lin L."/>
            <person name="Liu T.-Y."/>
        </authorList>
    </citation>
    <scope>NUCLEOTIDE SEQUENCE [GENOMIC DNA]</scope>
    <scope>PROTEIN SEQUENCE OF 17-31 AND 152-160</scope>
    <scope>DEVELOPMENTAL STAGE</scope>
    <scope>VARIANTS ALA-40; PHE-66; LEU-151 AND ILE-181</scope>
    <source>
        <tissue>Liver</tissue>
    </source>
</reference>
<dbReference type="EMBL" id="L08166">
    <property type="protein sequence ID" value="AAA49692.1"/>
    <property type="molecule type" value="Genomic_DNA"/>
</dbReference>
<dbReference type="PIR" id="A45487">
    <property type="entry name" value="A45487"/>
</dbReference>
<dbReference type="RefSeq" id="NP_001165686.1">
    <property type="nucleotide sequence ID" value="NM_001172215.1"/>
</dbReference>
<dbReference type="SMR" id="Q07203"/>
<dbReference type="DNASU" id="444374"/>
<dbReference type="GeneID" id="444374"/>
<dbReference type="KEGG" id="xla:444374"/>
<dbReference type="AGR" id="Xenbase:XB-GENE-6464307"/>
<dbReference type="CTD" id="444374"/>
<dbReference type="Xenbase" id="XB-GENE-6464307">
    <property type="gene designation" value="crp.4.L"/>
</dbReference>
<dbReference type="OrthoDB" id="547680at2759"/>
<dbReference type="CD-CODE" id="78E86D56">
    <property type="entry name" value="Mitochondrial cloud"/>
</dbReference>
<dbReference type="Proteomes" id="UP000186698">
    <property type="component" value="Chromosome 8L"/>
</dbReference>
<dbReference type="Bgee" id="444374">
    <property type="expression patterns" value="Expressed in spleen and 15 other cell types or tissues"/>
</dbReference>
<dbReference type="GO" id="GO:0005576">
    <property type="term" value="C:extracellular region"/>
    <property type="evidence" value="ECO:0007669"/>
    <property type="project" value="UniProtKB-SubCell"/>
</dbReference>
<dbReference type="GO" id="GO:0046872">
    <property type="term" value="F:metal ion binding"/>
    <property type="evidence" value="ECO:0007669"/>
    <property type="project" value="UniProtKB-KW"/>
</dbReference>
<dbReference type="GO" id="GO:0006953">
    <property type="term" value="P:acute-phase response"/>
    <property type="evidence" value="ECO:0007669"/>
    <property type="project" value="UniProtKB-KW"/>
</dbReference>
<dbReference type="CDD" id="cd00152">
    <property type="entry name" value="PTX"/>
    <property type="match status" value="1"/>
</dbReference>
<dbReference type="FunFam" id="2.60.120.200:FF:000070">
    <property type="entry name" value="Serum amyloid P-component"/>
    <property type="match status" value="1"/>
</dbReference>
<dbReference type="Gene3D" id="2.60.120.200">
    <property type="match status" value="1"/>
</dbReference>
<dbReference type="InterPro" id="IPR013320">
    <property type="entry name" value="ConA-like_dom_sf"/>
</dbReference>
<dbReference type="InterPro" id="IPR030476">
    <property type="entry name" value="Pentaxin_CS"/>
</dbReference>
<dbReference type="InterPro" id="IPR001759">
    <property type="entry name" value="Pentraxin-related"/>
</dbReference>
<dbReference type="InterPro" id="IPR051005">
    <property type="entry name" value="Pentraxin_domain"/>
</dbReference>
<dbReference type="PANTHER" id="PTHR45869:SF7">
    <property type="entry name" value="C-REACTIVE PROTEIN"/>
    <property type="match status" value="1"/>
</dbReference>
<dbReference type="PANTHER" id="PTHR45869">
    <property type="entry name" value="C-REACTIVE PROTEIN-RELATED"/>
    <property type="match status" value="1"/>
</dbReference>
<dbReference type="Pfam" id="PF00354">
    <property type="entry name" value="Pentaxin"/>
    <property type="match status" value="1"/>
</dbReference>
<dbReference type="PRINTS" id="PR00895">
    <property type="entry name" value="PENTAXIN"/>
</dbReference>
<dbReference type="SMART" id="SM00159">
    <property type="entry name" value="PTX"/>
    <property type="match status" value="1"/>
</dbReference>
<dbReference type="SUPFAM" id="SSF49899">
    <property type="entry name" value="Concanavalin A-like lectins/glucanases"/>
    <property type="match status" value="1"/>
</dbReference>
<dbReference type="PROSITE" id="PS00289">
    <property type="entry name" value="PTX_1"/>
    <property type="match status" value="1"/>
</dbReference>
<dbReference type="PROSITE" id="PS51828">
    <property type="entry name" value="PTX_2"/>
    <property type="match status" value="1"/>
</dbReference>
<sequence>MERFALWFIFLAGSLAQEDLVGNVFLFPKPSVTTYAILKPEVEKPLKNLTVCLRSYTTLTRFHSLLSLATSNPLQDNAFLLFSKPPNQCSIYINQEENVFKVDPTAVEWKHTCVSWDSVSGVVELWIDGKLYPRTVSKKASSIGFPSSIIQGQEQDSFGGGFNIDQSFVGEISDVHMWDYVLTPDHIQKVLFANMDFNGNIISWRSLQYELRGQATTQPKRQCKTLEHHYGLFAKCYK</sequence>
<organism>
    <name type="scientific">Xenopus laevis</name>
    <name type="common">African clawed frog</name>
    <dbReference type="NCBI Taxonomy" id="8355"/>
    <lineage>
        <taxon>Eukaryota</taxon>
        <taxon>Metazoa</taxon>
        <taxon>Chordata</taxon>
        <taxon>Craniata</taxon>
        <taxon>Vertebrata</taxon>
        <taxon>Euteleostomi</taxon>
        <taxon>Amphibia</taxon>
        <taxon>Batrachia</taxon>
        <taxon>Anura</taxon>
        <taxon>Pipoidea</taxon>
        <taxon>Pipidae</taxon>
        <taxon>Xenopodinae</taxon>
        <taxon>Xenopus</taxon>
        <taxon>Xenopus</taxon>
    </lineage>
</organism>
<comment type="function">
    <text>Displays several functions associated with host defense: it promotes agglutination, bacterial capsular swelling, phagocytosis, and complement fixation through its calcium-dependent binding to phosphorylcholine.</text>
</comment>
<comment type="cofactor">
    <cofactor evidence="1">
        <name>Ca(2+)</name>
        <dbReference type="ChEBI" id="CHEBI:29108"/>
    </cofactor>
    <text evidence="1">Binds 2 calcium ions per subunit.</text>
</comment>
<comment type="subunit">
    <text>Homodimer; disulfide-linked. It is not known if it assembles into a pentraxin (or pentaxin) structure. Pentaxins have a discoid arrangement of 5 non-covalently bound subunits.</text>
</comment>
<comment type="subcellular location">
    <subcellularLocation>
        <location>Secreted</location>
    </subcellularLocation>
</comment>
<comment type="developmental stage">
    <text evidence="3">Is initially detected at the late tail bud stage when the liver appears.</text>
</comment>
<comment type="PTM">
    <text>Cys-89 or Cys-223 or Cys-236 could be involved in interchain disulfide linkage.</text>
</comment>
<comment type="similarity">
    <text evidence="4">Belongs to the pentraxin family.</text>
</comment>
<comment type="online information" name="Protein Spotlight">
    <link uri="https://www.proteinspotlight.org/back_issues/030"/>
    <text>No more Christmas pudding? - Issue 30 of January 2003</text>
</comment>
<proteinExistence type="evidence at protein level"/>